<sequence>MFVVAAGLNHRTAPVAIREQLAFARHGLPPALCRLKEEAGVEGCVILSTCNRTEVYIACNQEEAGLKAAKNFLGRSCKLALADLEGYLYTLNTHHAVRHLFRVAAGLDSMILGEDQVLAQVAEAYQVARETGTTNNVLNTLWQQAIYAGKRVRTETRIDANTVSVSYAAVELARQVFHDELDGRTVLVIGAGKMSTLAARYLKDKGVTTVLVSNRSYDRAVALAATIGGQAVRLDALEDYLPRADIVISCTAASHYILHRDQVARAVAARPGVPLMLIDIAVPRDIEPAAGDLPGVKLYDIDDLQQVVLANLEERKKAARQAEGIIAAEAEAFFQWLGSLYVVPTIVALKEKAEAIKNAEVRRACNRLGQLTTREQKIITSMATTIVNQLLHDAIVNLKAAALTPRGHLYVEALQELFELRVDHTLPGPDMAVSVEGGRKY</sequence>
<protein>
    <recommendedName>
        <fullName evidence="1">Glutamyl-tRNA reductase</fullName>
        <shortName evidence="1">GluTR</shortName>
        <ecNumber evidence="1">1.2.1.70</ecNumber>
    </recommendedName>
</protein>
<evidence type="ECO:0000255" key="1">
    <source>
        <dbReference type="HAMAP-Rule" id="MF_00087"/>
    </source>
</evidence>
<gene>
    <name evidence="1" type="primary">hemA</name>
    <name type="ordered locus">Moth_1250</name>
</gene>
<keyword id="KW-0521">NADP</keyword>
<keyword id="KW-0560">Oxidoreductase</keyword>
<keyword id="KW-0627">Porphyrin biosynthesis</keyword>
<proteinExistence type="inferred from homology"/>
<accession>Q2RJ25</accession>
<comment type="function">
    <text evidence="1">Catalyzes the NADPH-dependent reduction of glutamyl-tRNA(Glu) to glutamate 1-semialdehyde (GSA).</text>
</comment>
<comment type="catalytic activity">
    <reaction evidence="1">
        <text>(S)-4-amino-5-oxopentanoate + tRNA(Glu) + NADP(+) = L-glutamyl-tRNA(Glu) + NADPH + H(+)</text>
        <dbReference type="Rhea" id="RHEA:12344"/>
        <dbReference type="Rhea" id="RHEA-COMP:9663"/>
        <dbReference type="Rhea" id="RHEA-COMP:9680"/>
        <dbReference type="ChEBI" id="CHEBI:15378"/>
        <dbReference type="ChEBI" id="CHEBI:57501"/>
        <dbReference type="ChEBI" id="CHEBI:57783"/>
        <dbReference type="ChEBI" id="CHEBI:58349"/>
        <dbReference type="ChEBI" id="CHEBI:78442"/>
        <dbReference type="ChEBI" id="CHEBI:78520"/>
        <dbReference type="EC" id="1.2.1.70"/>
    </reaction>
</comment>
<comment type="pathway">
    <text evidence="1">Porphyrin-containing compound metabolism; protoporphyrin-IX biosynthesis; 5-aminolevulinate from L-glutamyl-tRNA(Glu): step 1/2.</text>
</comment>
<comment type="subunit">
    <text evidence="1">Homodimer.</text>
</comment>
<comment type="domain">
    <text evidence="1">Possesses an unusual extended V-shaped dimeric structure with each monomer consisting of three distinct domains arranged along a curved 'spinal' alpha-helix. The N-terminal catalytic domain specifically recognizes the glutamate moiety of the substrate. The second domain is the NADPH-binding domain, and the third C-terminal domain is responsible for dimerization.</text>
</comment>
<comment type="miscellaneous">
    <text evidence="1">During catalysis, the active site Cys acts as a nucleophile attacking the alpha-carbonyl group of tRNA-bound glutamate with the formation of a thioester intermediate between enzyme and glutamate, and the concomitant release of tRNA(Glu). The thioester intermediate is finally reduced by direct hydride transfer from NADPH, to form the product GSA.</text>
</comment>
<comment type="similarity">
    <text evidence="1">Belongs to the glutamyl-tRNA reductase family.</text>
</comment>
<dbReference type="EC" id="1.2.1.70" evidence="1"/>
<dbReference type="EMBL" id="CP000232">
    <property type="protein sequence ID" value="ABC19564.1"/>
    <property type="molecule type" value="Genomic_DNA"/>
</dbReference>
<dbReference type="RefSeq" id="YP_430107.1">
    <property type="nucleotide sequence ID" value="NC_007644.1"/>
</dbReference>
<dbReference type="SMR" id="Q2RJ25"/>
<dbReference type="STRING" id="264732.Moth_1250"/>
<dbReference type="EnsemblBacteria" id="ABC19564">
    <property type="protein sequence ID" value="ABC19564"/>
    <property type="gene ID" value="Moth_1250"/>
</dbReference>
<dbReference type="KEGG" id="mta:Moth_1250"/>
<dbReference type="PATRIC" id="fig|264732.11.peg.1342"/>
<dbReference type="eggNOG" id="COG0373">
    <property type="taxonomic scope" value="Bacteria"/>
</dbReference>
<dbReference type="HOGENOM" id="CLU_035113_2_2_9"/>
<dbReference type="OrthoDB" id="110209at2"/>
<dbReference type="UniPathway" id="UPA00251">
    <property type="reaction ID" value="UER00316"/>
</dbReference>
<dbReference type="GO" id="GO:0008883">
    <property type="term" value="F:glutamyl-tRNA reductase activity"/>
    <property type="evidence" value="ECO:0007669"/>
    <property type="project" value="UniProtKB-UniRule"/>
</dbReference>
<dbReference type="GO" id="GO:0050661">
    <property type="term" value="F:NADP binding"/>
    <property type="evidence" value="ECO:0007669"/>
    <property type="project" value="InterPro"/>
</dbReference>
<dbReference type="GO" id="GO:0019353">
    <property type="term" value="P:protoporphyrinogen IX biosynthetic process from glutamate"/>
    <property type="evidence" value="ECO:0007669"/>
    <property type="project" value="TreeGrafter"/>
</dbReference>
<dbReference type="CDD" id="cd05213">
    <property type="entry name" value="NAD_bind_Glutamyl_tRNA_reduct"/>
    <property type="match status" value="1"/>
</dbReference>
<dbReference type="FunFam" id="3.30.460.30:FF:000001">
    <property type="entry name" value="Glutamyl-tRNA reductase"/>
    <property type="match status" value="1"/>
</dbReference>
<dbReference type="FunFam" id="3.40.50.720:FF:000031">
    <property type="entry name" value="Glutamyl-tRNA reductase"/>
    <property type="match status" value="1"/>
</dbReference>
<dbReference type="Gene3D" id="3.30.460.30">
    <property type="entry name" value="Glutamyl-tRNA reductase, N-terminal domain"/>
    <property type="match status" value="1"/>
</dbReference>
<dbReference type="Gene3D" id="3.40.50.720">
    <property type="entry name" value="NAD(P)-binding Rossmann-like Domain"/>
    <property type="match status" value="1"/>
</dbReference>
<dbReference type="HAMAP" id="MF_00087">
    <property type="entry name" value="Glu_tRNA_reductase"/>
    <property type="match status" value="1"/>
</dbReference>
<dbReference type="InterPro" id="IPR000343">
    <property type="entry name" value="4pyrrol_synth_GluRdtase"/>
</dbReference>
<dbReference type="InterPro" id="IPR015896">
    <property type="entry name" value="4pyrrol_synth_GluRdtase_dimer"/>
</dbReference>
<dbReference type="InterPro" id="IPR015895">
    <property type="entry name" value="4pyrrol_synth_GluRdtase_N"/>
</dbReference>
<dbReference type="InterPro" id="IPR036453">
    <property type="entry name" value="GluRdtase_dimer_dom_sf"/>
</dbReference>
<dbReference type="InterPro" id="IPR036343">
    <property type="entry name" value="GluRdtase_N_sf"/>
</dbReference>
<dbReference type="InterPro" id="IPR036291">
    <property type="entry name" value="NAD(P)-bd_dom_sf"/>
</dbReference>
<dbReference type="InterPro" id="IPR006151">
    <property type="entry name" value="Shikm_DH/Glu-tRNA_Rdtase"/>
</dbReference>
<dbReference type="NCBIfam" id="TIGR01035">
    <property type="entry name" value="hemA"/>
    <property type="match status" value="1"/>
</dbReference>
<dbReference type="NCBIfam" id="NF000744">
    <property type="entry name" value="PRK00045.1-3"/>
    <property type="match status" value="1"/>
</dbReference>
<dbReference type="PANTHER" id="PTHR43013">
    <property type="entry name" value="GLUTAMYL-TRNA REDUCTASE"/>
    <property type="match status" value="1"/>
</dbReference>
<dbReference type="PANTHER" id="PTHR43013:SF1">
    <property type="entry name" value="GLUTAMYL-TRNA REDUCTASE"/>
    <property type="match status" value="1"/>
</dbReference>
<dbReference type="Pfam" id="PF00745">
    <property type="entry name" value="GlutR_dimer"/>
    <property type="match status" value="1"/>
</dbReference>
<dbReference type="Pfam" id="PF05201">
    <property type="entry name" value="GlutR_N"/>
    <property type="match status" value="1"/>
</dbReference>
<dbReference type="Pfam" id="PF01488">
    <property type="entry name" value="Shikimate_DH"/>
    <property type="match status" value="1"/>
</dbReference>
<dbReference type="PIRSF" id="PIRSF000445">
    <property type="entry name" value="4pyrrol_synth_GluRdtase"/>
    <property type="match status" value="1"/>
</dbReference>
<dbReference type="SUPFAM" id="SSF69742">
    <property type="entry name" value="Glutamyl tRNA-reductase catalytic, N-terminal domain"/>
    <property type="match status" value="1"/>
</dbReference>
<dbReference type="SUPFAM" id="SSF69075">
    <property type="entry name" value="Glutamyl tRNA-reductase dimerization domain"/>
    <property type="match status" value="1"/>
</dbReference>
<dbReference type="SUPFAM" id="SSF51735">
    <property type="entry name" value="NAD(P)-binding Rossmann-fold domains"/>
    <property type="match status" value="1"/>
</dbReference>
<feature type="chain" id="PRO_1000004645" description="Glutamyl-tRNA reductase">
    <location>
        <begin position="1"/>
        <end position="441"/>
    </location>
</feature>
<feature type="active site" description="Nucleophile" evidence="1">
    <location>
        <position position="50"/>
    </location>
</feature>
<feature type="binding site" evidence="1">
    <location>
        <begin position="49"/>
        <end position="52"/>
    </location>
    <ligand>
        <name>substrate</name>
    </ligand>
</feature>
<feature type="binding site" evidence="1">
    <location>
        <position position="109"/>
    </location>
    <ligand>
        <name>substrate</name>
    </ligand>
</feature>
<feature type="binding site" evidence="1">
    <location>
        <begin position="114"/>
        <end position="116"/>
    </location>
    <ligand>
        <name>substrate</name>
    </ligand>
</feature>
<feature type="binding site" evidence="1">
    <location>
        <position position="120"/>
    </location>
    <ligand>
        <name>substrate</name>
    </ligand>
</feature>
<feature type="binding site" evidence="1">
    <location>
        <begin position="190"/>
        <end position="195"/>
    </location>
    <ligand>
        <name>NADP(+)</name>
        <dbReference type="ChEBI" id="CHEBI:58349"/>
    </ligand>
</feature>
<feature type="site" description="Important for activity" evidence="1">
    <location>
        <position position="99"/>
    </location>
</feature>
<reference key="1">
    <citation type="journal article" date="2008" name="Environ. Microbiol.">
        <title>The complete genome sequence of Moorella thermoacetica (f. Clostridium thermoaceticum).</title>
        <authorList>
            <person name="Pierce E."/>
            <person name="Xie G."/>
            <person name="Barabote R.D."/>
            <person name="Saunders E."/>
            <person name="Han C.S."/>
            <person name="Detter J.C."/>
            <person name="Richardson P."/>
            <person name="Brettin T.S."/>
            <person name="Das A."/>
            <person name="Ljungdahl L.G."/>
            <person name="Ragsdale S.W."/>
        </authorList>
    </citation>
    <scope>NUCLEOTIDE SEQUENCE [LARGE SCALE GENOMIC DNA]</scope>
    <source>
        <strain>ATCC 39073 / JCM 9320</strain>
    </source>
</reference>
<name>HEM1_MOOTA</name>
<organism>
    <name type="scientific">Moorella thermoacetica (strain ATCC 39073 / JCM 9320)</name>
    <dbReference type="NCBI Taxonomy" id="264732"/>
    <lineage>
        <taxon>Bacteria</taxon>
        <taxon>Bacillati</taxon>
        <taxon>Bacillota</taxon>
        <taxon>Clostridia</taxon>
        <taxon>Moorellales</taxon>
        <taxon>Moorellaceae</taxon>
        <taxon>Moorella</taxon>
    </lineage>
</organism>